<sequence length="102" mass="11144">MIPGQYQIQPGDIELNAGRRTHSLTVANSGDRPIQVGSHFHFFETNDALTFDRAASRGMRLNIPAGTAVRFEPGQSREVELVDLAGLREVYGFAGRVMGALD</sequence>
<organism>
    <name type="scientific">Pseudomonas syringae pv. tomato (strain ATCC BAA-871 / DC3000)</name>
    <dbReference type="NCBI Taxonomy" id="223283"/>
    <lineage>
        <taxon>Bacteria</taxon>
        <taxon>Pseudomonadati</taxon>
        <taxon>Pseudomonadota</taxon>
        <taxon>Gammaproteobacteria</taxon>
        <taxon>Pseudomonadales</taxon>
        <taxon>Pseudomonadaceae</taxon>
        <taxon>Pseudomonas</taxon>
    </lineage>
</organism>
<reference key="1">
    <citation type="journal article" date="2003" name="Proc. Natl. Acad. Sci. U.S.A.">
        <title>The complete genome sequence of the Arabidopsis and tomato pathogen Pseudomonas syringae pv. tomato DC3000.</title>
        <authorList>
            <person name="Buell C.R."/>
            <person name="Joardar V."/>
            <person name="Lindeberg M."/>
            <person name="Selengut J."/>
            <person name="Paulsen I.T."/>
            <person name="Gwinn M.L."/>
            <person name="Dodson R.J."/>
            <person name="DeBoy R.T."/>
            <person name="Durkin A.S."/>
            <person name="Kolonay J.F."/>
            <person name="Madupu R."/>
            <person name="Daugherty S.C."/>
            <person name="Brinkac L.M."/>
            <person name="Beanan M.J."/>
            <person name="Haft D.H."/>
            <person name="Nelson W.C."/>
            <person name="Davidsen T.M."/>
            <person name="Zafar N."/>
            <person name="Zhou L."/>
            <person name="Liu J."/>
            <person name="Yuan Q."/>
            <person name="Khouri H.M."/>
            <person name="Fedorova N.B."/>
            <person name="Tran B."/>
            <person name="Russell D."/>
            <person name="Berry K.J."/>
            <person name="Utterback T.R."/>
            <person name="Van Aken S.E."/>
            <person name="Feldblyum T.V."/>
            <person name="D'Ascenzo M."/>
            <person name="Deng W.-L."/>
            <person name="Ramos A.R."/>
            <person name="Alfano J.R."/>
            <person name="Cartinhour S."/>
            <person name="Chatterjee A.K."/>
            <person name="Delaney T.P."/>
            <person name="Lazarowitz S.G."/>
            <person name="Martin G.B."/>
            <person name="Schneider D.J."/>
            <person name="Tang X."/>
            <person name="Bender C.L."/>
            <person name="White O."/>
            <person name="Fraser C.M."/>
            <person name="Collmer A."/>
        </authorList>
    </citation>
    <scope>NUCLEOTIDE SEQUENCE [LARGE SCALE GENOMIC DNA]</scope>
    <source>
        <strain>ATCC BAA-871 / DC3000</strain>
    </source>
</reference>
<protein>
    <recommendedName>
        <fullName evidence="1">Urease subunit beta</fullName>
        <ecNumber evidence="1">3.5.1.5</ecNumber>
    </recommendedName>
    <alternativeName>
        <fullName evidence="1">Urea amidohydrolase subunit beta</fullName>
    </alternativeName>
</protein>
<proteinExistence type="inferred from homology"/>
<name>URE2_PSESM</name>
<gene>
    <name evidence="1" type="primary">ureB</name>
    <name type="ordered locus">PSPTO_4894</name>
</gene>
<feature type="chain" id="PRO_0000234266" description="Urease subunit beta">
    <location>
        <begin position="1"/>
        <end position="102"/>
    </location>
</feature>
<keyword id="KW-0963">Cytoplasm</keyword>
<keyword id="KW-0378">Hydrolase</keyword>
<keyword id="KW-1185">Reference proteome</keyword>
<comment type="catalytic activity">
    <reaction evidence="1">
        <text>urea + 2 H2O + H(+) = hydrogencarbonate + 2 NH4(+)</text>
        <dbReference type="Rhea" id="RHEA:20557"/>
        <dbReference type="ChEBI" id="CHEBI:15377"/>
        <dbReference type="ChEBI" id="CHEBI:15378"/>
        <dbReference type="ChEBI" id="CHEBI:16199"/>
        <dbReference type="ChEBI" id="CHEBI:17544"/>
        <dbReference type="ChEBI" id="CHEBI:28938"/>
        <dbReference type="EC" id="3.5.1.5"/>
    </reaction>
</comment>
<comment type="pathway">
    <text evidence="1">Nitrogen metabolism; urea degradation; CO(2) and NH(3) from urea (urease route): step 1/1.</text>
</comment>
<comment type="subunit">
    <text evidence="1">Heterotrimer of UreA (gamma), UreB (beta) and UreC (alpha) subunits. Three heterotrimers associate to form the active enzyme.</text>
</comment>
<comment type="subcellular location">
    <subcellularLocation>
        <location evidence="1">Cytoplasm</location>
    </subcellularLocation>
</comment>
<comment type="similarity">
    <text evidence="1">Belongs to the urease beta subunit family.</text>
</comment>
<accession>Q87VP1</accession>
<evidence type="ECO:0000255" key="1">
    <source>
        <dbReference type="HAMAP-Rule" id="MF_01954"/>
    </source>
</evidence>
<dbReference type="EC" id="3.5.1.5" evidence="1"/>
<dbReference type="EMBL" id="AE016853">
    <property type="protein sequence ID" value="AAO58323.1"/>
    <property type="molecule type" value="Genomic_DNA"/>
</dbReference>
<dbReference type="RefSeq" id="NP_794628.1">
    <property type="nucleotide sequence ID" value="NC_004578.1"/>
</dbReference>
<dbReference type="RefSeq" id="WP_005763098.1">
    <property type="nucleotide sequence ID" value="NC_004578.1"/>
</dbReference>
<dbReference type="SMR" id="Q87VP1"/>
<dbReference type="STRING" id="223283.PSPTO_4894"/>
<dbReference type="GeneID" id="1186577"/>
<dbReference type="KEGG" id="pst:PSPTO_4894"/>
<dbReference type="PATRIC" id="fig|223283.9.peg.5007"/>
<dbReference type="eggNOG" id="COG0832">
    <property type="taxonomic scope" value="Bacteria"/>
</dbReference>
<dbReference type="HOGENOM" id="CLU_129707_1_1_6"/>
<dbReference type="OrthoDB" id="9797217at2"/>
<dbReference type="PhylomeDB" id="Q87VP1"/>
<dbReference type="UniPathway" id="UPA00258">
    <property type="reaction ID" value="UER00370"/>
</dbReference>
<dbReference type="Proteomes" id="UP000002515">
    <property type="component" value="Chromosome"/>
</dbReference>
<dbReference type="GO" id="GO:0035550">
    <property type="term" value="C:urease complex"/>
    <property type="evidence" value="ECO:0007669"/>
    <property type="project" value="InterPro"/>
</dbReference>
<dbReference type="GO" id="GO:0009039">
    <property type="term" value="F:urease activity"/>
    <property type="evidence" value="ECO:0007669"/>
    <property type="project" value="UniProtKB-UniRule"/>
</dbReference>
<dbReference type="GO" id="GO:0043419">
    <property type="term" value="P:urea catabolic process"/>
    <property type="evidence" value="ECO:0007669"/>
    <property type="project" value="UniProtKB-UniRule"/>
</dbReference>
<dbReference type="CDD" id="cd00407">
    <property type="entry name" value="Urease_beta"/>
    <property type="match status" value="1"/>
</dbReference>
<dbReference type="FunFam" id="2.10.150.10:FF:000001">
    <property type="entry name" value="Urease subunit beta"/>
    <property type="match status" value="1"/>
</dbReference>
<dbReference type="Gene3D" id="2.10.150.10">
    <property type="entry name" value="Urease, beta subunit"/>
    <property type="match status" value="1"/>
</dbReference>
<dbReference type="HAMAP" id="MF_01954">
    <property type="entry name" value="Urease_beta"/>
    <property type="match status" value="1"/>
</dbReference>
<dbReference type="InterPro" id="IPR002019">
    <property type="entry name" value="Urease_beta-like"/>
</dbReference>
<dbReference type="InterPro" id="IPR036461">
    <property type="entry name" value="Urease_betasu_sf"/>
</dbReference>
<dbReference type="InterPro" id="IPR050069">
    <property type="entry name" value="Urease_subunit"/>
</dbReference>
<dbReference type="NCBIfam" id="NF009682">
    <property type="entry name" value="PRK13203.1"/>
    <property type="match status" value="1"/>
</dbReference>
<dbReference type="NCBIfam" id="TIGR00192">
    <property type="entry name" value="urease_beta"/>
    <property type="match status" value="1"/>
</dbReference>
<dbReference type="PANTHER" id="PTHR33569">
    <property type="entry name" value="UREASE"/>
    <property type="match status" value="1"/>
</dbReference>
<dbReference type="PANTHER" id="PTHR33569:SF1">
    <property type="entry name" value="UREASE"/>
    <property type="match status" value="1"/>
</dbReference>
<dbReference type="Pfam" id="PF00699">
    <property type="entry name" value="Urease_beta"/>
    <property type="match status" value="1"/>
</dbReference>
<dbReference type="SUPFAM" id="SSF51278">
    <property type="entry name" value="Urease, beta-subunit"/>
    <property type="match status" value="1"/>
</dbReference>